<organism>
    <name type="scientific">Yersinia pestis (strain Pestoides F)</name>
    <dbReference type="NCBI Taxonomy" id="386656"/>
    <lineage>
        <taxon>Bacteria</taxon>
        <taxon>Pseudomonadati</taxon>
        <taxon>Pseudomonadota</taxon>
        <taxon>Gammaproteobacteria</taxon>
        <taxon>Enterobacterales</taxon>
        <taxon>Yersiniaceae</taxon>
        <taxon>Yersinia</taxon>
    </lineage>
</organism>
<name>FRSA_YERPP</name>
<keyword id="KW-0378">Hydrolase</keyword>
<keyword id="KW-0719">Serine esterase</keyword>
<feature type="chain" id="PRO_1000064496" description="Esterase FrsA">
    <location>
        <begin position="1"/>
        <end position="415"/>
    </location>
</feature>
<comment type="function">
    <text evidence="1">Catalyzes the hydrolysis of esters.</text>
</comment>
<comment type="catalytic activity">
    <reaction evidence="1">
        <text>a carboxylic ester + H2O = an alcohol + a carboxylate + H(+)</text>
        <dbReference type="Rhea" id="RHEA:21164"/>
        <dbReference type="ChEBI" id="CHEBI:15377"/>
        <dbReference type="ChEBI" id="CHEBI:15378"/>
        <dbReference type="ChEBI" id="CHEBI:29067"/>
        <dbReference type="ChEBI" id="CHEBI:30879"/>
        <dbReference type="ChEBI" id="CHEBI:33308"/>
        <dbReference type="EC" id="3.1.1.1"/>
    </reaction>
</comment>
<comment type="similarity">
    <text evidence="1">Belongs to the FrsA family.</text>
</comment>
<sequence>MAQANLSEILFKPKFKHPETSTLVRRTHCNHVVNIHSALDGDTANHWYRMINRLMWTWRGIDPLEIEEVLSRIACSKAEHSNNELLDTVVGYRNGNWIYEWANQGMMWQQKAMEETDPGSAGQFWLNAANLYSIASYPHLKGDELSEQAEVLSNRAYEEAAKYLPYTLKELTFPISDGGSLSGFLHMPTVGSAPFPTVLMCGGLDTLQSDYHRLFRDYLEPKGIAMLTIDLPSVGASSRWKLTQDTSYLHQQVLQALADVPWVDHQRVSVFGFRFGANVAVRLGYLEPQRVRAVACLGPIVHHLLCNSDSLRKVPDMYMDVMASRLGMADSTDETLNTEMNRYSLKTQGLLGRRCQTPMLAGFWENDPFSPKEEAKLICSSSADGKLLAIPSKPLYENFHRALLQTSEWLEDKMR</sequence>
<protein>
    <recommendedName>
        <fullName evidence="1">Esterase FrsA</fullName>
        <ecNumber evidence="1">3.1.1.1</ecNumber>
    </recommendedName>
</protein>
<accession>A4TPK3</accession>
<proteinExistence type="inferred from homology"/>
<gene>
    <name evidence="1" type="primary">frsA</name>
    <name type="ordered locus">YPDSF_2853</name>
</gene>
<evidence type="ECO:0000255" key="1">
    <source>
        <dbReference type="HAMAP-Rule" id="MF_01063"/>
    </source>
</evidence>
<dbReference type="EC" id="3.1.1.1" evidence="1"/>
<dbReference type="EMBL" id="CP000668">
    <property type="protein sequence ID" value="ABP41215.1"/>
    <property type="molecule type" value="Genomic_DNA"/>
</dbReference>
<dbReference type="RefSeq" id="WP_002208703.1">
    <property type="nucleotide sequence ID" value="NZ_CP009715.1"/>
</dbReference>
<dbReference type="SMR" id="A4TPK3"/>
<dbReference type="ESTHER" id="yerpe-y3224">
    <property type="family name" value="Duf_1100-R"/>
</dbReference>
<dbReference type="GeneID" id="57975494"/>
<dbReference type="KEGG" id="ypp:YPDSF_2853"/>
<dbReference type="PATRIC" id="fig|386656.14.peg.115"/>
<dbReference type="GO" id="GO:0106435">
    <property type="term" value="F:carboxylesterase activity"/>
    <property type="evidence" value="ECO:0007669"/>
    <property type="project" value="UniProtKB-EC"/>
</dbReference>
<dbReference type="FunFam" id="3.40.50.1820:FF:000022">
    <property type="entry name" value="Esterase FrsA"/>
    <property type="match status" value="1"/>
</dbReference>
<dbReference type="Gene3D" id="3.40.50.1820">
    <property type="entry name" value="alpha/beta hydrolase"/>
    <property type="match status" value="1"/>
</dbReference>
<dbReference type="HAMAP" id="MF_01063">
    <property type="entry name" value="FrsA"/>
    <property type="match status" value="1"/>
</dbReference>
<dbReference type="InterPro" id="IPR029058">
    <property type="entry name" value="AB_hydrolase_fold"/>
</dbReference>
<dbReference type="InterPro" id="IPR043423">
    <property type="entry name" value="FrsA"/>
</dbReference>
<dbReference type="InterPro" id="IPR010520">
    <property type="entry name" value="FrsA-like"/>
</dbReference>
<dbReference type="InterPro" id="IPR050261">
    <property type="entry name" value="FrsA_esterase"/>
</dbReference>
<dbReference type="NCBIfam" id="NF003460">
    <property type="entry name" value="PRK05077.1"/>
    <property type="match status" value="1"/>
</dbReference>
<dbReference type="PANTHER" id="PTHR22946">
    <property type="entry name" value="DIENELACTONE HYDROLASE DOMAIN-CONTAINING PROTEIN-RELATED"/>
    <property type="match status" value="1"/>
</dbReference>
<dbReference type="PANTHER" id="PTHR22946:SF4">
    <property type="entry name" value="ESTERASE FRSA"/>
    <property type="match status" value="1"/>
</dbReference>
<dbReference type="Pfam" id="PF06500">
    <property type="entry name" value="FrsA-like"/>
    <property type="match status" value="1"/>
</dbReference>
<dbReference type="SUPFAM" id="SSF53474">
    <property type="entry name" value="alpha/beta-Hydrolases"/>
    <property type="match status" value="1"/>
</dbReference>
<reference key="1">
    <citation type="submission" date="2007-02" db="EMBL/GenBank/DDBJ databases">
        <title>Complete sequence of chromosome of Yersinia pestis Pestoides F.</title>
        <authorList>
            <consortium name="US DOE Joint Genome Institute"/>
            <person name="Copeland A."/>
            <person name="Lucas S."/>
            <person name="Lapidus A."/>
            <person name="Barry K."/>
            <person name="Detter J.C."/>
            <person name="Glavina del Rio T."/>
            <person name="Hammon N."/>
            <person name="Israni S."/>
            <person name="Dalin E."/>
            <person name="Tice H."/>
            <person name="Pitluck S."/>
            <person name="Di Bartolo G."/>
            <person name="Chain P."/>
            <person name="Malfatti S."/>
            <person name="Shin M."/>
            <person name="Vergez L."/>
            <person name="Schmutz J."/>
            <person name="Larimer F."/>
            <person name="Land M."/>
            <person name="Hauser L."/>
            <person name="Worsham P."/>
            <person name="Chu M."/>
            <person name="Bearden S."/>
            <person name="Garcia E."/>
            <person name="Richardson P."/>
        </authorList>
    </citation>
    <scope>NUCLEOTIDE SEQUENCE [LARGE SCALE GENOMIC DNA]</scope>
    <source>
        <strain>Pestoides F</strain>
    </source>
</reference>